<sequence length="929" mass="105715">MDSKYNPVSIEQKWQKNWAEQNQDQTPINNNQPKFYALSMFPYPSGNLHMGHVRNYTITDVIARLKRMQGYRVLHPMGWDAFGLPAENAAIDRGIPPAKWTLENIAQMKEQLRRLGFSIDWDKEVATCTPEYYRWTQWIFLQFFQAGLAYQKESAVNWDPIDQTVLANEQVDGEGRSWRSGAKVERKMLRQWFFKITDYAEQLLNDLDKLPGWPERVKLMQANWIGKSVGAYLEFPIVGMDQKIGVFTTRPDTVYGVSYVVLAPEHPLTAKVTTPEQQITVETFIKEVAAESELERTAEDKPKRGVPTGGKAINPFNNQEVPIWIADYVLYEYGTGAVMGVPAHDVRDFQFAKQYNLPIKTVIVPDDSNDDHKLTEAYTDVGVMVNSGPFNGEKSTVAKKAIIELAEDEGYGKGRVQYRLRDWLISRQRYWGAPIPIIHCPKCGAVPVPDEDLPVKLPESVEFSGRGPSPLAKLEDWVNVSCPSCGTPAKRETDTMDTFIDSSWYYLRYPDATNEEQVFDSKIVNDWLPVDQYVGGIEHAILHLLYSRFFTKVLRDRGLCDFDEPFQNLLTQGMVQGVTYKNPVTGKYIPFADVNPQEPKDPKTGDKLEVFFEKMSKSKYNGVDPMDVMATYGADTARMFILFKAPPEKDLEWDDADVQGQFRFLNRVWSMVMEFLANHSFSELKAKHHGITQADLKDLGWSRYLITEITKNISAFKLRNVVKVYPVEDVLVAIEAKFNYSETQQETKDDLQKVLTWIKSRFGGELTKAEKDVRRAVHNAIKEVTEDLDGDYQFNTAVSEMMKLSNALGDASCKDSPIYAEALETLLLLLAPFAPHITEELWQIAGNFGSVHTHAWPKFDPEALVVDEITLVIQIKGKTRGTIQVPAQADKETLEKLARESDIAQRHLAGKEIKKVIVVPRKLVNFVVI</sequence>
<feature type="chain" id="PRO_1000009459" description="Leucine--tRNA ligase">
    <location>
        <begin position="1"/>
        <end position="929"/>
    </location>
</feature>
<feature type="short sequence motif" description="'HIGH' region">
    <location>
        <begin position="42"/>
        <end position="52"/>
    </location>
</feature>
<feature type="short sequence motif" description="'KMSKS' region">
    <location>
        <begin position="614"/>
        <end position="618"/>
    </location>
</feature>
<feature type="binding site" evidence="1">
    <location>
        <position position="617"/>
    </location>
    <ligand>
        <name>ATP</name>
        <dbReference type="ChEBI" id="CHEBI:30616"/>
    </ligand>
</feature>
<proteinExistence type="inferred from homology"/>
<name>SYL_TRIEI</name>
<comment type="catalytic activity">
    <reaction evidence="1">
        <text>tRNA(Leu) + L-leucine + ATP = L-leucyl-tRNA(Leu) + AMP + diphosphate</text>
        <dbReference type="Rhea" id="RHEA:11688"/>
        <dbReference type="Rhea" id="RHEA-COMP:9613"/>
        <dbReference type="Rhea" id="RHEA-COMP:9622"/>
        <dbReference type="ChEBI" id="CHEBI:30616"/>
        <dbReference type="ChEBI" id="CHEBI:33019"/>
        <dbReference type="ChEBI" id="CHEBI:57427"/>
        <dbReference type="ChEBI" id="CHEBI:78442"/>
        <dbReference type="ChEBI" id="CHEBI:78494"/>
        <dbReference type="ChEBI" id="CHEBI:456215"/>
        <dbReference type="EC" id="6.1.1.4"/>
    </reaction>
</comment>
<comment type="subcellular location">
    <subcellularLocation>
        <location evidence="1">Cytoplasm</location>
    </subcellularLocation>
</comment>
<comment type="similarity">
    <text evidence="1">Belongs to the class-I aminoacyl-tRNA synthetase family.</text>
</comment>
<gene>
    <name evidence="1" type="primary">leuS</name>
    <name type="ordered locus">Tery_1704</name>
</gene>
<accession>Q114V5</accession>
<protein>
    <recommendedName>
        <fullName evidence="1">Leucine--tRNA ligase</fullName>
        <ecNumber evidence="1">6.1.1.4</ecNumber>
    </recommendedName>
    <alternativeName>
        <fullName evidence="1">Leucyl-tRNA synthetase</fullName>
        <shortName evidence="1">LeuRS</shortName>
    </alternativeName>
</protein>
<evidence type="ECO:0000255" key="1">
    <source>
        <dbReference type="HAMAP-Rule" id="MF_00049"/>
    </source>
</evidence>
<dbReference type="EC" id="6.1.1.4" evidence="1"/>
<dbReference type="EMBL" id="CP000393">
    <property type="protein sequence ID" value="ABG50969.1"/>
    <property type="molecule type" value="Genomic_DNA"/>
</dbReference>
<dbReference type="RefSeq" id="WP_011611344.1">
    <property type="nucleotide sequence ID" value="NC_008312.1"/>
</dbReference>
<dbReference type="SMR" id="Q114V5"/>
<dbReference type="STRING" id="203124.Tery_1704"/>
<dbReference type="KEGG" id="ter:Tery_1704"/>
<dbReference type="eggNOG" id="COG0495">
    <property type="taxonomic scope" value="Bacteria"/>
</dbReference>
<dbReference type="HOGENOM" id="CLU_004427_0_0_3"/>
<dbReference type="OrthoDB" id="9810365at2"/>
<dbReference type="GO" id="GO:0005829">
    <property type="term" value="C:cytosol"/>
    <property type="evidence" value="ECO:0007669"/>
    <property type="project" value="TreeGrafter"/>
</dbReference>
<dbReference type="GO" id="GO:0002161">
    <property type="term" value="F:aminoacyl-tRNA deacylase activity"/>
    <property type="evidence" value="ECO:0007669"/>
    <property type="project" value="InterPro"/>
</dbReference>
<dbReference type="GO" id="GO:0005524">
    <property type="term" value="F:ATP binding"/>
    <property type="evidence" value="ECO:0007669"/>
    <property type="project" value="UniProtKB-UniRule"/>
</dbReference>
<dbReference type="GO" id="GO:0004823">
    <property type="term" value="F:leucine-tRNA ligase activity"/>
    <property type="evidence" value="ECO:0007669"/>
    <property type="project" value="UniProtKB-UniRule"/>
</dbReference>
<dbReference type="GO" id="GO:0006429">
    <property type="term" value="P:leucyl-tRNA aminoacylation"/>
    <property type="evidence" value="ECO:0007669"/>
    <property type="project" value="UniProtKB-UniRule"/>
</dbReference>
<dbReference type="CDD" id="cd07958">
    <property type="entry name" value="Anticodon_Ia_Leu_BEm"/>
    <property type="match status" value="1"/>
</dbReference>
<dbReference type="CDD" id="cd00812">
    <property type="entry name" value="LeuRS_core"/>
    <property type="match status" value="1"/>
</dbReference>
<dbReference type="FunFam" id="1.10.730.10:FF:000002">
    <property type="entry name" value="Leucine--tRNA ligase"/>
    <property type="match status" value="2"/>
</dbReference>
<dbReference type="FunFam" id="3.40.50.620:FF:000003">
    <property type="entry name" value="Leucine--tRNA ligase"/>
    <property type="match status" value="1"/>
</dbReference>
<dbReference type="FunFam" id="3.40.50.620:FF:000100">
    <property type="entry name" value="probable leucine--tRNA ligase, mitochondrial"/>
    <property type="match status" value="1"/>
</dbReference>
<dbReference type="Gene3D" id="3.10.20.590">
    <property type="match status" value="1"/>
</dbReference>
<dbReference type="Gene3D" id="3.40.50.620">
    <property type="entry name" value="HUPs"/>
    <property type="match status" value="2"/>
</dbReference>
<dbReference type="Gene3D" id="1.10.730.10">
    <property type="entry name" value="Isoleucyl-tRNA Synthetase, Domain 1"/>
    <property type="match status" value="2"/>
</dbReference>
<dbReference type="HAMAP" id="MF_00049_B">
    <property type="entry name" value="Leu_tRNA_synth_B"/>
    <property type="match status" value="1"/>
</dbReference>
<dbReference type="InterPro" id="IPR001412">
    <property type="entry name" value="aa-tRNA-synth_I_CS"/>
</dbReference>
<dbReference type="InterPro" id="IPR002300">
    <property type="entry name" value="aa-tRNA-synth_Ia"/>
</dbReference>
<dbReference type="InterPro" id="IPR002302">
    <property type="entry name" value="Leu-tRNA-ligase"/>
</dbReference>
<dbReference type="InterPro" id="IPR025709">
    <property type="entry name" value="Leu_tRNA-synth_edit"/>
</dbReference>
<dbReference type="InterPro" id="IPR013155">
    <property type="entry name" value="M/V/L/I-tRNA-synth_anticd-bd"/>
</dbReference>
<dbReference type="InterPro" id="IPR015413">
    <property type="entry name" value="Methionyl/Leucyl_tRNA_Synth"/>
</dbReference>
<dbReference type="InterPro" id="IPR014729">
    <property type="entry name" value="Rossmann-like_a/b/a_fold"/>
</dbReference>
<dbReference type="InterPro" id="IPR009080">
    <property type="entry name" value="tRNAsynth_Ia_anticodon-bd"/>
</dbReference>
<dbReference type="InterPro" id="IPR009008">
    <property type="entry name" value="Val/Leu/Ile-tRNA-synth_edit"/>
</dbReference>
<dbReference type="NCBIfam" id="TIGR00396">
    <property type="entry name" value="leuS_bact"/>
    <property type="match status" value="1"/>
</dbReference>
<dbReference type="PANTHER" id="PTHR43740:SF2">
    <property type="entry name" value="LEUCINE--TRNA LIGASE, MITOCHONDRIAL"/>
    <property type="match status" value="1"/>
</dbReference>
<dbReference type="PANTHER" id="PTHR43740">
    <property type="entry name" value="LEUCYL-TRNA SYNTHETASE"/>
    <property type="match status" value="1"/>
</dbReference>
<dbReference type="Pfam" id="PF08264">
    <property type="entry name" value="Anticodon_1"/>
    <property type="match status" value="1"/>
</dbReference>
<dbReference type="Pfam" id="PF00133">
    <property type="entry name" value="tRNA-synt_1"/>
    <property type="match status" value="2"/>
</dbReference>
<dbReference type="Pfam" id="PF13603">
    <property type="entry name" value="tRNA-synt_1_2"/>
    <property type="match status" value="1"/>
</dbReference>
<dbReference type="Pfam" id="PF09334">
    <property type="entry name" value="tRNA-synt_1g"/>
    <property type="match status" value="1"/>
</dbReference>
<dbReference type="PRINTS" id="PR00985">
    <property type="entry name" value="TRNASYNTHLEU"/>
</dbReference>
<dbReference type="SUPFAM" id="SSF47323">
    <property type="entry name" value="Anticodon-binding domain of a subclass of class I aminoacyl-tRNA synthetases"/>
    <property type="match status" value="1"/>
</dbReference>
<dbReference type="SUPFAM" id="SSF52374">
    <property type="entry name" value="Nucleotidylyl transferase"/>
    <property type="match status" value="1"/>
</dbReference>
<dbReference type="SUPFAM" id="SSF50677">
    <property type="entry name" value="ValRS/IleRS/LeuRS editing domain"/>
    <property type="match status" value="1"/>
</dbReference>
<dbReference type="PROSITE" id="PS00178">
    <property type="entry name" value="AA_TRNA_LIGASE_I"/>
    <property type="match status" value="1"/>
</dbReference>
<keyword id="KW-0030">Aminoacyl-tRNA synthetase</keyword>
<keyword id="KW-0067">ATP-binding</keyword>
<keyword id="KW-0963">Cytoplasm</keyword>
<keyword id="KW-0436">Ligase</keyword>
<keyword id="KW-0547">Nucleotide-binding</keyword>
<keyword id="KW-0648">Protein biosynthesis</keyword>
<reference key="1">
    <citation type="journal article" date="2015" name="Proc. Natl. Acad. Sci. U.S.A.">
        <title>Trichodesmium genome maintains abundant, widespread noncoding DNA in situ, despite oligotrophic lifestyle.</title>
        <authorList>
            <person name="Walworth N."/>
            <person name="Pfreundt U."/>
            <person name="Nelson W.C."/>
            <person name="Mincer T."/>
            <person name="Heidelberg J.F."/>
            <person name="Fu F."/>
            <person name="Waterbury J.B."/>
            <person name="Glavina del Rio T."/>
            <person name="Goodwin L."/>
            <person name="Kyrpides N.C."/>
            <person name="Land M.L."/>
            <person name="Woyke T."/>
            <person name="Hutchins D.A."/>
            <person name="Hess W.R."/>
            <person name="Webb E.A."/>
        </authorList>
    </citation>
    <scope>NUCLEOTIDE SEQUENCE [LARGE SCALE GENOMIC DNA]</scope>
    <source>
        <strain>IMS101</strain>
    </source>
</reference>
<organism>
    <name type="scientific">Trichodesmium erythraeum (strain IMS101)</name>
    <dbReference type="NCBI Taxonomy" id="203124"/>
    <lineage>
        <taxon>Bacteria</taxon>
        <taxon>Bacillati</taxon>
        <taxon>Cyanobacteriota</taxon>
        <taxon>Cyanophyceae</taxon>
        <taxon>Oscillatoriophycideae</taxon>
        <taxon>Oscillatoriales</taxon>
        <taxon>Microcoleaceae</taxon>
        <taxon>Trichodesmium</taxon>
    </lineage>
</organism>